<proteinExistence type="inferred from homology"/>
<name>RS12_BURO0</name>
<organism>
    <name type="scientific">Burkholderia orbicola (strain MC0-3)</name>
    <dbReference type="NCBI Taxonomy" id="406425"/>
    <lineage>
        <taxon>Bacteria</taxon>
        <taxon>Pseudomonadati</taxon>
        <taxon>Pseudomonadota</taxon>
        <taxon>Betaproteobacteria</taxon>
        <taxon>Burkholderiales</taxon>
        <taxon>Burkholderiaceae</taxon>
        <taxon>Burkholderia</taxon>
        <taxon>Burkholderia cepacia complex</taxon>
        <taxon>Burkholderia orbicola</taxon>
    </lineage>
</organism>
<feature type="chain" id="PRO_1000194136" description="Small ribosomal subunit protein uS12">
    <location>
        <begin position="1"/>
        <end position="126"/>
    </location>
</feature>
<feature type="region of interest" description="Disordered" evidence="3">
    <location>
        <begin position="1"/>
        <end position="28"/>
    </location>
</feature>
<feature type="region of interest" description="Disordered" evidence="3">
    <location>
        <begin position="103"/>
        <end position="126"/>
    </location>
</feature>
<feature type="compositionally biased region" description="Basic residues" evidence="3">
    <location>
        <begin position="113"/>
        <end position="126"/>
    </location>
</feature>
<feature type="modified residue" description="3-methylthioaspartic acid" evidence="1">
    <location>
        <position position="89"/>
    </location>
</feature>
<gene>
    <name evidence="2" type="primary">rpsL</name>
    <name type="ordered locus">Bcenmc03_0322</name>
</gene>
<accession>B1JU17</accession>
<protein>
    <recommendedName>
        <fullName evidence="2">Small ribosomal subunit protein uS12</fullName>
    </recommendedName>
    <alternativeName>
        <fullName evidence="4">30S ribosomal protein S12</fullName>
    </alternativeName>
</protein>
<keyword id="KW-0488">Methylation</keyword>
<keyword id="KW-0687">Ribonucleoprotein</keyword>
<keyword id="KW-0689">Ribosomal protein</keyword>
<keyword id="KW-0694">RNA-binding</keyword>
<keyword id="KW-0699">rRNA-binding</keyword>
<keyword id="KW-0820">tRNA-binding</keyword>
<reference key="1">
    <citation type="submission" date="2008-02" db="EMBL/GenBank/DDBJ databases">
        <title>Complete sequence of chromosome 1 of Burkholderia cenocepacia MC0-3.</title>
        <authorList>
            <person name="Copeland A."/>
            <person name="Lucas S."/>
            <person name="Lapidus A."/>
            <person name="Barry K."/>
            <person name="Bruce D."/>
            <person name="Goodwin L."/>
            <person name="Glavina del Rio T."/>
            <person name="Dalin E."/>
            <person name="Tice H."/>
            <person name="Pitluck S."/>
            <person name="Chain P."/>
            <person name="Malfatti S."/>
            <person name="Shin M."/>
            <person name="Vergez L."/>
            <person name="Schmutz J."/>
            <person name="Larimer F."/>
            <person name="Land M."/>
            <person name="Hauser L."/>
            <person name="Kyrpides N."/>
            <person name="Mikhailova N."/>
            <person name="Tiedje J."/>
            <person name="Richardson P."/>
        </authorList>
    </citation>
    <scope>NUCLEOTIDE SEQUENCE [LARGE SCALE GENOMIC DNA]</scope>
    <source>
        <strain>MC0-3</strain>
    </source>
</reference>
<dbReference type="EMBL" id="CP000958">
    <property type="protein sequence ID" value="ACA89502.1"/>
    <property type="molecule type" value="Genomic_DNA"/>
</dbReference>
<dbReference type="RefSeq" id="WP_006400662.1">
    <property type="nucleotide sequence ID" value="NC_010508.1"/>
</dbReference>
<dbReference type="SMR" id="B1JU17"/>
<dbReference type="GeneID" id="98108172"/>
<dbReference type="KEGG" id="bcm:Bcenmc03_0322"/>
<dbReference type="HOGENOM" id="CLU_104295_1_2_4"/>
<dbReference type="Proteomes" id="UP000002169">
    <property type="component" value="Chromosome 1"/>
</dbReference>
<dbReference type="GO" id="GO:0015935">
    <property type="term" value="C:small ribosomal subunit"/>
    <property type="evidence" value="ECO:0007669"/>
    <property type="project" value="InterPro"/>
</dbReference>
<dbReference type="GO" id="GO:0019843">
    <property type="term" value="F:rRNA binding"/>
    <property type="evidence" value="ECO:0007669"/>
    <property type="project" value="UniProtKB-UniRule"/>
</dbReference>
<dbReference type="GO" id="GO:0003735">
    <property type="term" value="F:structural constituent of ribosome"/>
    <property type="evidence" value="ECO:0007669"/>
    <property type="project" value="InterPro"/>
</dbReference>
<dbReference type="GO" id="GO:0000049">
    <property type="term" value="F:tRNA binding"/>
    <property type="evidence" value="ECO:0007669"/>
    <property type="project" value="UniProtKB-UniRule"/>
</dbReference>
<dbReference type="GO" id="GO:0006412">
    <property type="term" value="P:translation"/>
    <property type="evidence" value="ECO:0007669"/>
    <property type="project" value="UniProtKB-UniRule"/>
</dbReference>
<dbReference type="CDD" id="cd03368">
    <property type="entry name" value="Ribosomal_S12"/>
    <property type="match status" value="1"/>
</dbReference>
<dbReference type="FunFam" id="2.40.50.140:FF:000001">
    <property type="entry name" value="30S ribosomal protein S12"/>
    <property type="match status" value="1"/>
</dbReference>
<dbReference type="Gene3D" id="2.40.50.140">
    <property type="entry name" value="Nucleic acid-binding proteins"/>
    <property type="match status" value="1"/>
</dbReference>
<dbReference type="HAMAP" id="MF_00403_B">
    <property type="entry name" value="Ribosomal_uS12_B"/>
    <property type="match status" value="1"/>
</dbReference>
<dbReference type="InterPro" id="IPR012340">
    <property type="entry name" value="NA-bd_OB-fold"/>
</dbReference>
<dbReference type="InterPro" id="IPR006032">
    <property type="entry name" value="Ribosomal_uS12"/>
</dbReference>
<dbReference type="InterPro" id="IPR005679">
    <property type="entry name" value="Ribosomal_uS12_bac"/>
</dbReference>
<dbReference type="NCBIfam" id="TIGR00981">
    <property type="entry name" value="rpsL_bact"/>
    <property type="match status" value="1"/>
</dbReference>
<dbReference type="PANTHER" id="PTHR11652">
    <property type="entry name" value="30S RIBOSOMAL PROTEIN S12 FAMILY MEMBER"/>
    <property type="match status" value="1"/>
</dbReference>
<dbReference type="Pfam" id="PF00164">
    <property type="entry name" value="Ribosom_S12_S23"/>
    <property type="match status" value="1"/>
</dbReference>
<dbReference type="PIRSF" id="PIRSF002133">
    <property type="entry name" value="Ribosomal_S12/S23"/>
    <property type="match status" value="1"/>
</dbReference>
<dbReference type="PRINTS" id="PR01034">
    <property type="entry name" value="RIBOSOMALS12"/>
</dbReference>
<dbReference type="SUPFAM" id="SSF50249">
    <property type="entry name" value="Nucleic acid-binding proteins"/>
    <property type="match status" value="1"/>
</dbReference>
<dbReference type="PROSITE" id="PS00055">
    <property type="entry name" value="RIBOSOMAL_S12"/>
    <property type="match status" value="1"/>
</dbReference>
<sequence>MPTINQLVRKGRQSETTKSKSPALQDCPQRRGVCTRVYTTTPKKPNSALRKVAKVRLTNGFEVISYIGGEGHNLQEHSVVLIRGGRVKDLPGVRYHMVRGSLDTQGVKDRKQARSKYGAKRAKAAK</sequence>
<evidence type="ECO:0000250" key="1"/>
<evidence type="ECO:0000255" key="2">
    <source>
        <dbReference type="HAMAP-Rule" id="MF_00403"/>
    </source>
</evidence>
<evidence type="ECO:0000256" key="3">
    <source>
        <dbReference type="SAM" id="MobiDB-lite"/>
    </source>
</evidence>
<evidence type="ECO:0000305" key="4"/>
<comment type="function">
    <text evidence="2">With S4 and S5 plays an important role in translational accuracy.</text>
</comment>
<comment type="function">
    <text evidence="2">Interacts with and stabilizes bases of the 16S rRNA that are involved in tRNA selection in the A site and with the mRNA backbone. Located at the interface of the 30S and 50S subunits, it traverses the body of the 30S subunit contacting proteins on the other side and probably holding the rRNA structure together. The combined cluster of proteins S8, S12 and S17 appears to hold together the shoulder and platform of the 30S subunit.</text>
</comment>
<comment type="subunit">
    <text evidence="2">Part of the 30S ribosomal subunit. Contacts proteins S8 and S17. May interact with IF1 in the 30S initiation complex.</text>
</comment>
<comment type="similarity">
    <text evidence="2">Belongs to the universal ribosomal protein uS12 family.</text>
</comment>